<sequence>MDERDALRISREIAGEVRKAIASMPLRERVKDVGMGKDGTPTKAADRVAEDAALEILRKERVTVVTEESGVLGEGDVFVALDPLDGTFNATRGIPVYSVSLCFSYSDKLKDAFFGYVYNLATGDEYYADSSGAYRNGERIEVSDAEELYCNAIIYYPDRKFPFKRMRIFGSAATELCFFADGSFDCFLDIRPGKMLRIYDAAAGVFIAEKAGGKVTELDGESLGNKKFDMQERLNIVAANEKLHPKLLELIK</sequence>
<dbReference type="EC" id="3.1.3.11" evidence="2 3"/>
<dbReference type="EC" id="3.1.3.25" evidence="1 2 3"/>
<dbReference type="EMBL" id="AE000782">
    <property type="protein sequence ID" value="AAB91288.1"/>
    <property type="molecule type" value="Genomic_DNA"/>
</dbReference>
<dbReference type="PIR" id="D69546">
    <property type="entry name" value="D69546"/>
</dbReference>
<dbReference type="RefSeq" id="WP_010879859.1">
    <property type="nucleotide sequence ID" value="NC_000917.1"/>
</dbReference>
<dbReference type="PDB" id="1LBV">
    <property type="method" value="X-ray"/>
    <property type="resolution" value="1.80 A"/>
    <property type="chains" value="A/B=1-252"/>
</dbReference>
<dbReference type="PDB" id="1LBW">
    <property type="method" value="X-ray"/>
    <property type="resolution" value="2.00 A"/>
    <property type="chains" value="A/B=1-252"/>
</dbReference>
<dbReference type="PDB" id="1LBX">
    <property type="method" value="X-ray"/>
    <property type="resolution" value="2.40 A"/>
    <property type="chains" value="A/B=1-252"/>
</dbReference>
<dbReference type="PDB" id="1LBY">
    <property type="method" value="X-ray"/>
    <property type="resolution" value="2.25 A"/>
    <property type="chains" value="A/B=1-252"/>
</dbReference>
<dbReference type="PDB" id="1LBZ">
    <property type="method" value="X-ray"/>
    <property type="resolution" value="2.20 A"/>
    <property type="chains" value="A/B=1-252"/>
</dbReference>
<dbReference type="PDB" id="6B5Z">
    <property type="method" value="X-ray"/>
    <property type="resolution" value="2.30 A"/>
    <property type="chains" value="A/B=1-252"/>
</dbReference>
<dbReference type="PDB" id="6B60">
    <property type="method" value="X-ray"/>
    <property type="resolution" value="2.70 A"/>
    <property type="chains" value="A/B=1-252"/>
</dbReference>
<dbReference type="PDB" id="6B61">
    <property type="method" value="X-ray"/>
    <property type="resolution" value="2.70 A"/>
    <property type="chains" value="A/B=1-252"/>
</dbReference>
<dbReference type="PDB" id="6B62">
    <property type="method" value="X-ray"/>
    <property type="resolution" value="2.00 A"/>
    <property type="chains" value="A/B=1-252"/>
</dbReference>
<dbReference type="PDB" id="6B63">
    <property type="method" value="X-ray"/>
    <property type="resolution" value="2.70 A"/>
    <property type="chains" value="A/B=1-252"/>
</dbReference>
<dbReference type="PDB" id="6B64">
    <property type="method" value="X-ray"/>
    <property type="resolution" value="2.60 A"/>
    <property type="chains" value="A/B=1-252"/>
</dbReference>
<dbReference type="PDB" id="6B65">
    <property type="method" value="X-ray"/>
    <property type="resolution" value="2.70 A"/>
    <property type="chains" value="A/B=1-252"/>
</dbReference>
<dbReference type="PDB" id="6B66">
    <property type="method" value="X-ray"/>
    <property type="resolution" value="2.50 A"/>
    <property type="chains" value="A/B=1-252"/>
</dbReference>
<dbReference type="PDBsum" id="1LBV"/>
<dbReference type="PDBsum" id="1LBW"/>
<dbReference type="PDBsum" id="1LBX"/>
<dbReference type="PDBsum" id="1LBY"/>
<dbReference type="PDBsum" id="1LBZ"/>
<dbReference type="PDBsum" id="6B5Z"/>
<dbReference type="PDBsum" id="6B60"/>
<dbReference type="PDBsum" id="6B61"/>
<dbReference type="PDBsum" id="6B62"/>
<dbReference type="PDBsum" id="6B63"/>
<dbReference type="PDBsum" id="6B64"/>
<dbReference type="PDBsum" id="6B65"/>
<dbReference type="PDBsum" id="6B66"/>
<dbReference type="SMR" id="O30298"/>
<dbReference type="STRING" id="224325.AF_2372"/>
<dbReference type="PaxDb" id="224325-AF_2372"/>
<dbReference type="EnsemblBacteria" id="AAB91288">
    <property type="protein sequence ID" value="AAB91288"/>
    <property type="gene ID" value="AF_2372"/>
</dbReference>
<dbReference type="GeneID" id="24796117"/>
<dbReference type="KEGG" id="afu:AF_2372"/>
<dbReference type="eggNOG" id="arCOG01349">
    <property type="taxonomic scope" value="Archaea"/>
</dbReference>
<dbReference type="HOGENOM" id="CLU_044118_5_0_2"/>
<dbReference type="OrthoDB" id="58111at2157"/>
<dbReference type="PhylomeDB" id="O30298"/>
<dbReference type="BioCyc" id="MetaCyc:MONOMER-124169"/>
<dbReference type="BRENDA" id="3.1.3.108">
    <property type="organism ID" value="414"/>
</dbReference>
<dbReference type="BRENDA" id="3.1.3.11">
    <property type="organism ID" value="414"/>
</dbReference>
<dbReference type="BRENDA" id="3.1.3.25">
    <property type="organism ID" value="414"/>
</dbReference>
<dbReference type="SABIO-RK" id="O30298"/>
<dbReference type="EvolutionaryTrace" id="O30298"/>
<dbReference type="Proteomes" id="UP000002199">
    <property type="component" value="Chromosome"/>
</dbReference>
<dbReference type="GO" id="GO:0042132">
    <property type="term" value="F:fructose 1,6-bisphosphate 1-phosphatase activity"/>
    <property type="evidence" value="ECO:0007669"/>
    <property type="project" value="UniProtKB-EC"/>
</dbReference>
<dbReference type="GO" id="GO:0008934">
    <property type="term" value="F:inositol monophosphate 1-phosphatase activity"/>
    <property type="evidence" value="ECO:0007669"/>
    <property type="project" value="TreeGrafter"/>
</dbReference>
<dbReference type="GO" id="GO:0046872">
    <property type="term" value="F:metal ion binding"/>
    <property type="evidence" value="ECO:0007669"/>
    <property type="project" value="UniProtKB-KW"/>
</dbReference>
<dbReference type="GO" id="GO:0006020">
    <property type="term" value="P:inositol metabolic process"/>
    <property type="evidence" value="ECO:0007669"/>
    <property type="project" value="TreeGrafter"/>
</dbReference>
<dbReference type="GO" id="GO:0046854">
    <property type="term" value="P:phosphatidylinositol phosphate biosynthetic process"/>
    <property type="evidence" value="ECO:0007669"/>
    <property type="project" value="InterPro"/>
</dbReference>
<dbReference type="GO" id="GO:0007165">
    <property type="term" value="P:signal transduction"/>
    <property type="evidence" value="ECO:0007669"/>
    <property type="project" value="TreeGrafter"/>
</dbReference>
<dbReference type="FunFam" id="3.40.190.80:FF:000020">
    <property type="entry name" value="Fructose-1,6-bisphosphatase/inositol-1-monophosphatase"/>
    <property type="match status" value="1"/>
</dbReference>
<dbReference type="Gene3D" id="3.40.190.80">
    <property type="match status" value="1"/>
</dbReference>
<dbReference type="Gene3D" id="3.30.540.10">
    <property type="entry name" value="Fructose-1,6-Bisphosphatase, subunit A, domain 1"/>
    <property type="match status" value="1"/>
</dbReference>
<dbReference type="InterPro" id="IPR000760">
    <property type="entry name" value="Inositol_monophosphatase-like"/>
</dbReference>
<dbReference type="InterPro" id="IPR020550">
    <property type="entry name" value="Inositol_monophosphatase_CS"/>
</dbReference>
<dbReference type="PANTHER" id="PTHR20854">
    <property type="entry name" value="INOSITOL MONOPHOSPHATASE"/>
    <property type="match status" value="1"/>
</dbReference>
<dbReference type="PANTHER" id="PTHR20854:SF4">
    <property type="entry name" value="INOSITOL-1-MONOPHOSPHATASE-RELATED"/>
    <property type="match status" value="1"/>
</dbReference>
<dbReference type="Pfam" id="PF00459">
    <property type="entry name" value="Inositol_P"/>
    <property type="match status" value="1"/>
</dbReference>
<dbReference type="PRINTS" id="PR00377">
    <property type="entry name" value="IMPHPHTASES"/>
</dbReference>
<dbReference type="SUPFAM" id="SSF56655">
    <property type="entry name" value="Carbohydrate phosphatase"/>
    <property type="match status" value="1"/>
</dbReference>
<dbReference type="PROSITE" id="PS00629">
    <property type="entry name" value="IMP_1"/>
    <property type="match status" value="1"/>
</dbReference>
<dbReference type="PROSITE" id="PS00630">
    <property type="entry name" value="IMP_2"/>
    <property type="match status" value="1"/>
</dbReference>
<evidence type="ECO:0000269" key="1">
    <source>
    </source>
</evidence>
<evidence type="ECO:0000269" key="2">
    <source>
    </source>
</evidence>
<evidence type="ECO:0000269" key="3">
    <source>
    </source>
</evidence>
<evidence type="ECO:0000305" key="4"/>
<evidence type="ECO:0007829" key="5">
    <source>
        <dbReference type="PDB" id="1LBV"/>
    </source>
</evidence>
<gene>
    <name type="primary">suhB</name>
    <name type="ordered locus">AF_2372</name>
</gene>
<feature type="chain" id="PRO_0000142579" description="Fructose-1,6-bisphosphatase/inositol-1-monophosphatase">
    <location>
        <begin position="1"/>
        <end position="252"/>
    </location>
</feature>
<feature type="binding site">
    <location>
        <position position="38"/>
    </location>
    <ligand>
        <name>Mg(2+)</name>
        <dbReference type="ChEBI" id="CHEBI:18420"/>
        <label>3</label>
    </ligand>
</feature>
<feature type="binding site">
    <location>
        <position position="40"/>
    </location>
    <ligand>
        <name>Mg(2+)</name>
        <dbReference type="ChEBI" id="CHEBI:18420"/>
        <label>3</label>
    </ligand>
</feature>
<feature type="binding site">
    <location>
        <position position="67"/>
    </location>
    <ligand>
        <name>Mg(2+)</name>
        <dbReference type="ChEBI" id="CHEBI:18420"/>
        <label>1</label>
    </ligand>
</feature>
<feature type="binding site">
    <location>
        <position position="67"/>
    </location>
    <ligand>
        <name>Mg(2+)</name>
        <dbReference type="ChEBI" id="CHEBI:18420"/>
        <label>3</label>
    </ligand>
</feature>
<feature type="binding site">
    <location>
        <position position="82"/>
    </location>
    <ligand>
        <name>Mg(2+)</name>
        <dbReference type="ChEBI" id="CHEBI:18420"/>
        <label>1</label>
    </ligand>
</feature>
<feature type="binding site">
    <location>
        <position position="82"/>
    </location>
    <ligand>
        <name>Mg(2+)</name>
        <dbReference type="ChEBI" id="CHEBI:18420"/>
        <label>2</label>
    </ligand>
</feature>
<feature type="binding site">
    <location>
        <position position="84"/>
    </location>
    <ligand>
        <name>Mg(2+)</name>
        <dbReference type="ChEBI" id="CHEBI:18420"/>
        <label>1</label>
    </ligand>
</feature>
<feature type="binding site">
    <location>
        <begin position="85"/>
        <end position="87"/>
    </location>
    <ligand>
        <name>substrate</name>
    </ligand>
</feature>
<feature type="binding site">
    <location>
        <position position="85"/>
    </location>
    <ligand>
        <name>Mg(2+)</name>
        <dbReference type="ChEBI" id="CHEBI:18420"/>
        <label>2</label>
    </ligand>
</feature>
<feature type="binding site">
    <location>
        <position position="167"/>
    </location>
    <ligand>
        <name>substrate</name>
    </ligand>
</feature>
<feature type="binding site">
    <location>
        <position position="172"/>
    </location>
    <ligand>
        <name>substrate</name>
    </ligand>
</feature>
<feature type="binding site">
    <location>
        <position position="191"/>
    </location>
    <ligand>
        <name>substrate</name>
    </ligand>
</feature>
<feature type="binding site">
    <location>
        <position position="200"/>
    </location>
    <ligand>
        <name>Mg(2+)</name>
        <dbReference type="ChEBI" id="CHEBI:18420"/>
        <label>2</label>
    </ligand>
</feature>
<feature type="helix" evidence="5">
    <location>
        <begin position="3"/>
        <end position="22"/>
    </location>
</feature>
<feature type="helix" evidence="5">
    <location>
        <begin position="26"/>
        <end position="29"/>
    </location>
</feature>
<feature type="strand" evidence="5">
    <location>
        <begin position="32"/>
        <end position="35"/>
    </location>
</feature>
<feature type="strand" evidence="5">
    <location>
        <begin position="37"/>
        <end position="43"/>
    </location>
</feature>
<feature type="helix" evidence="5">
    <location>
        <begin position="44"/>
        <end position="57"/>
    </location>
</feature>
<feature type="strand" evidence="5">
    <location>
        <begin position="60"/>
        <end position="66"/>
    </location>
</feature>
<feature type="turn" evidence="5">
    <location>
        <begin position="67"/>
        <end position="69"/>
    </location>
</feature>
<feature type="strand" evidence="5">
    <location>
        <begin position="70"/>
        <end position="72"/>
    </location>
</feature>
<feature type="strand" evidence="5">
    <location>
        <begin position="76"/>
        <end position="85"/>
    </location>
</feature>
<feature type="helix" evidence="5">
    <location>
        <begin position="87"/>
        <end position="91"/>
    </location>
</feature>
<feature type="strand" evidence="5">
    <location>
        <begin position="98"/>
        <end position="108"/>
    </location>
</feature>
<feature type="helix" evidence="5">
    <location>
        <begin position="109"/>
        <end position="111"/>
    </location>
</feature>
<feature type="strand" evidence="5">
    <location>
        <begin position="112"/>
        <end position="119"/>
    </location>
</feature>
<feature type="turn" evidence="5">
    <location>
        <begin position="120"/>
        <end position="122"/>
    </location>
</feature>
<feature type="strand" evidence="5">
    <location>
        <begin position="125"/>
        <end position="129"/>
    </location>
</feature>
<feature type="strand" evidence="5">
    <location>
        <begin position="132"/>
        <end position="135"/>
    </location>
</feature>
<feature type="strand" evidence="5">
    <location>
        <begin position="138"/>
        <end position="140"/>
    </location>
</feature>
<feature type="strand" evidence="5">
    <location>
        <begin position="147"/>
        <end position="155"/>
    </location>
</feature>
<feature type="strand" evidence="5">
    <location>
        <begin position="164"/>
        <end position="168"/>
    </location>
</feature>
<feature type="helix" evidence="5">
    <location>
        <begin position="172"/>
        <end position="180"/>
    </location>
</feature>
<feature type="strand" evidence="5">
    <location>
        <begin position="183"/>
        <end position="189"/>
    </location>
</feature>
<feature type="helix" evidence="5">
    <location>
        <begin position="198"/>
        <end position="210"/>
    </location>
</feature>
<feature type="strand" evidence="5">
    <location>
        <begin position="214"/>
        <end position="216"/>
    </location>
</feature>
<feature type="strand" evidence="5">
    <location>
        <begin position="227"/>
        <end position="230"/>
    </location>
</feature>
<feature type="strand" evidence="5">
    <location>
        <begin position="236"/>
        <end position="239"/>
    </location>
</feature>
<feature type="turn" evidence="5">
    <location>
        <begin position="241"/>
        <end position="243"/>
    </location>
</feature>
<feature type="helix" evidence="5">
    <location>
        <begin position="244"/>
        <end position="251"/>
    </location>
</feature>
<protein>
    <recommendedName>
        <fullName>Fructose-1,6-bisphosphatase/inositol-1-monophosphatase</fullName>
        <shortName>FBPase/IMPase</shortName>
        <ecNumber evidence="2 3">3.1.3.11</ecNumber>
        <ecNumber evidence="1 2 3">3.1.3.25</ecNumber>
    </recommendedName>
    <alternativeName>
        <fullName>Inositol-1-phosphatase</fullName>
        <shortName>I-1-Pase</shortName>
    </alternativeName>
</protein>
<keyword id="KW-0002">3D-structure</keyword>
<keyword id="KW-0119">Carbohydrate metabolism</keyword>
<keyword id="KW-0378">Hydrolase</keyword>
<keyword id="KW-0460">Magnesium</keyword>
<keyword id="KW-0464">Manganese</keyword>
<keyword id="KW-0479">Metal-binding</keyword>
<keyword id="KW-1185">Reference proteome</keyword>
<proteinExistence type="evidence at protein level"/>
<reference key="1">
    <citation type="journal article" date="1997" name="Nature">
        <title>The complete genome sequence of the hyperthermophilic, sulphate-reducing archaeon Archaeoglobus fulgidus.</title>
        <authorList>
            <person name="Klenk H.-P."/>
            <person name="Clayton R.A."/>
            <person name="Tomb J.-F."/>
            <person name="White O."/>
            <person name="Nelson K.E."/>
            <person name="Ketchum K.A."/>
            <person name="Dodson R.J."/>
            <person name="Gwinn M.L."/>
            <person name="Hickey E.K."/>
            <person name="Peterson J.D."/>
            <person name="Richardson D.L."/>
            <person name="Kerlavage A.R."/>
            <person name="Graham D.E."/>
            <person name="Kyrpides N.C."/>
            <person name="Fleischmann R.D."/>
            <person name="Quackenbush J."/>
            <person name="Lee N.H."/>
            <person name="Sutton G.G."/>
            <person name="Gill S.R."/>
            <person name="Kirkness E.F."/>
            <person name="Dougherty B.A."/>
            <person name="McKenney K."/>
            <person name="Adams M.D."/>
            <person name="Loftus B.J."/>
            <person name="Peterson S.N."/>
            <person name="Reich C.I."/>
            <person name="McNeil L.K."/>
            <person name="Badger J.H."/>
            <person name="Glodek A."/>
            <person name="Zhou L."/>
            <person name="Overbeek R."/>
            <person name="Gocayne J.D."/>
            <person name="Weidman J.F."/>
            <person name="McDonald L.A."/>
            <person name="Utterback T.R."/>
            <person name="Cotton M.D."/>
            <person name="Spriggs T."/>
            <person name="Artiach P."/>
            <person name="Kaine B.P."/>
            <person name="Sykes S.M."/>
            <person name="Sadow P.W."/>
            <person name="D'Andrea K.P."/>
            <person name="Bowman C."/>
            <person name="Fujii C."/>
            <person name="Garland S.A."/>
            <person name="Mason T.M."/>
            <person name="Olsen G.J."/>
            <person name="Fraser C.M."/>
            <person name="Smith H.O."/>
            <person name="Woese C.R."/>
            <person name="Venter J.C."/>
        </authorList>
    </citation>
    <scope>NUCLEOTIDE SEQUENCE [LARGE SCALE GENOMIC DNA]</scope>
    <source>
        <strain>ATCC 49558 / DSM 4304 / JCM 9628 / NBRC 100126 / VC-16</strain>
    </source>
</reference>
<reference key="2">
    <citation type="journal article" date="2000" name="Biochemistry">
        <title>Overexpression, purification, and analysis of complementation behavior of E. coli SuhB protein: comparison with bacterial and archaeal inositol monophosphatases.</title>
        <authorList>
            <person name="Chen L."/>
            <person name="Roberts M.F."/>
        </authorList>
    </citation>
    <scope>FUNCTION AS IMPASE</scope>
    <scope>CATALYTIC ACTIVITY</scope>
</reference>
<reference key="3">
    <citation type="journal article" date="2000" name="Nat. Struct. Biol.">
        <title>MJ0109 is an enzyme that is both an inositol monophosphatase and the 'missing' archaeal fructose-1,6-bisphosphatase.</title>
        <authorList>
            <person name="Stec B."/>
            <person name="Yang H."/>
            <person name="Johnson K.A."/>
            <person name="Chen L."/>
            <person name="Roberts M.F."/>
        </authorList>
    </citation>
    <scope>FUNCTION AS BOTH FBPASE AND IMPASE</scope>
    <scope>CATALYTIC ACTIVITY</scope>
    <scope>KINETIC PARAMETERS</scope>
    <scope>SUBUNIT</scope>
    <source>
        <strain>ATCC 49558 / DSM 4304 / JCM 9628 / NBRC 100126 / VC-16</strain>
    </source>
</reference>
<reference key="4">
    <citation type="journal article" date="2002" name="J. Biol. Chem.">
        <title>Crystal structure of a dual activity IMPase/FBPase (AF2372) from Archaeoglobus fulgidus. The story of a mobile loop.</title>
        <authorList>
            <person name="Stieglitz K.A."/>
            <person name="Johnson K.A."/>
            <person name="Yang H."/>
            <person name="Roberts M.F."/>
            <person name="Seaton B.A."/>
            <person name="Head J.F."/>
            <person name="Stec B."/>
        </authorList>
    </citation>
    <scope>X-RAY CRYSTALLOGRAPHY (1.8 ANGSTROMS) OF APOENZYME AND IN COMPLEXES WITH I-1-P; FBP; F-6-P AND METAL IONS</scope>
    <scope>FUNCTION AS BOTH FBPASE AND IMPASE</scope>
    <scope>CATALYTIC ACTIVITY</scope>
    <scope>SUBSTRATE SPECIFICITY</scope>
    <scope>KINETIC PARAMETERS</scope>
    <scope>ACTIVITY REGULATION</scope>
    <scope>COFACTOR</scope>
</reference>
<comment type="function">
    <text evidence="1 2 3">Phosphatase with broad specificity; it can dephosphorylate fructose 1,6-bisphosphate, both D and L isomers of inositol-1-phosphate (I-1-P), 2'-AMP, pNPP, inositol-2-phosphate, beta-glycerol phosphate, and alpha-D-glucose-1-phosphate. Cannot hydrolyze glucose-6-phosphate and fructose-6-phosphate. May be involved in the biosynthesis of a unique osmolyte, di-myo-inositol 1,1-phosphate.</text>
</comment>
<comment type="catalytic activity">
    <reaction evidence="2 3">
        <text>beta-D-fructose 1,6-bisphosphate + H2O = beta-D-fructose 6-phosphate + phosphate</text>
        <dbReference type="Rhea" id="RHEA:11064"/>
        <dbReference type="ChEBI" id="CHEBI:15377"/>
        <dbReference type="ChEBI" id="CHEBI:32966"/>
        <dbReference type="ChEBI" id="CHEBI:43474"/>
        <dbReference type="ChEBI" id="CHEBI:57634"/>
        <dbReference type="EC" id="3.1.3.11"/>
    </reaction>
</comment>
<comment type="catalytic activity">
    <reaction evidence="1 2 3">
        <text>a myo-inositol phosphate + H2O = myo-inositol + phosphate</text>
        <dbReference type="Rhea" id="RHEA:24056"/>
        <dbReference type="ChEBI" id="CHEBI:15377"/>
        <dbReference type="ChEBI" id="CHEBI:17268"/>
        <dbReference type="ChEBI" id="CHEBI:43474"/>
        <dbReference type="ChEBI" id="CHEBI:84139"/>
        <dbReference type="EC" id="3.1.3.25"/>
    </reaction>
</comment>
<comment type="cofactor">
    <cofactor evidence="3">
        <name>Mg(2+)</name>
        <dbReference type="ChEBI" id="CHEBI:18420"/>
    </cofactor>
    <cofactor evidence="3">
        <name>Mn(2+)</name>
        <dbReference type="ChEBI" id="CHEBI:29035"/>
    </cofactor>
    <text evidence="3">Magnesium. Can also use manganese.</text>
</comment>
<comment type="activity regulation">
    <text evidence="3">Both FBPase and IMPase activities are inhibited by Ca(2+). In contrast to mammalian I-1-P phosphatases, is only very weakly inhibited by Li(+) (with an IC(50) of about 290 mM).</text>
</comment>
<comment type="biophysicochemical properties">
    <kinetics>
        <KM evidence="2 3">0.11 mM for inositol-1-phosphate (at 85 degrees Celsius)</KM>
        <KM evidence="2 3">0.08 mM for D-fructose 1,6-bisphosphate (at 85 degrees Celsius)</KM>
        <Vmax evidence="2 3">3.27 umol/min/mg enzyme with L-inositol-1-phosphate as substrate (at 80 degrees Celsius, pH 8, in the presence of Mg(2+))</Vmax>
        <Vmax evidence="2 3">2.2 umol/min/mg enzyme with L-inositol-1-phosphate as substrate (at 80 degrees Celsius, pH 8, in the presence of Mn(2+))</Vmax>
        <Vmax evidence="2 3">1.52 umol/min/mg enzyme with D-fructose 1,6-bisphosphate as substrate (at 80 degrees Celsius, pH 8, in the presence of Mg(2+))</Vmax>
        <Vmax evidence="2 3">1.92 umol/min/mg enzyme with D-fructose 1,6-bisphosphate as substrate (at 80 degrees Celsius, pH 8, in the presence of Mn(2+))</Vmax>
        <text evidence="2">kcat is 2.5 sec(-1) for IMPase activity (at 85 degrees Celsius) and 2.7 sec(-1) for FBPase activity (at 85 degrees Celsius).</text>
    </kinetics>
</comment>
<comment type="subunit">
    <text evidence="2">Homodimer.</text>
</comment>
<comment type="similarity">
    <text evidence="4">Belongs to the inositol monophosphatase superfamily. FBPase class 4 family.</text>
</comment>
<name>BSUHB_ARCFU</name>
<accession>O30298</accession>
<organism>
    <name type="scientific">Archaeoglobus fulgidus (strain ATCC 49558 / DSM 4304 / JCM 9628 / NBRC 100126 / VC-16)</name>
    <dbReference type="NCBI Taxonomy" id="224325"/>
    <lineage>
        <taxon>Archaea</taxon>
        <taxon>Methanobacteriati</taxon>
        <taxon>Methanobacteriota</taxon>
        <taxon>Archaeoglobi</taxon>
        <taxon>Archaeoglobales</taxon>
        <taxon>Archaeoglobaceae</taxon>
        <taxon>Archaeoglobus</taxon>
    </lineage>
</organism>